<organism>
    <name type="scientific">Acinetobacter baumannii (strain ACICU)</name>
    <dbReference type="NCBI Taxonomy" id="405416"/>
    <lineage>
        <taxon>Bacteria</taxon>
        <taxon>Pseudomonadati</taxon>
        <taxon>Pseudomonadota</taxon>
        <taxon>Gammaproteobacteria</taxon>
        <taxon>Moraxellales</taxon>
        <taxon>Moraxellaceae</taxon>
        <taxon>Acinetobacter</taxon>
        <taxon>Acinetobacter calcoaceticus/baumannii complex</taxon>
    </lineage>
</organism>
<comment type="function">
    <text evidence="1">Catalyzes the reversible transfer of the terminal phosphate group between ATP and AMP. Plays an important role in cellular energy homeostasis and in adenine nucleotide metabolism.</text>
</comment>
<comment type="catalytic activity">
    <reaction evidence="1">
        <text>AMP + ATP = 2 ADP</text>
        <dbReference type="Rhea" id="RHEA:12973"/>
        <dbReference type="ChEBI" id="CHEBI:30616"/>
        <dbReference type="ChEBI" id="CHEBI:456215"/>
        <dbReference type="ChEBI" id="CHEBI:456216"/>
        <dbReference type="EC" id="2.7.4.3"/>
    </reaction>
</comment>
<comment type="pathway">
    <text evidence="1">Purine metabolism; AMP biosynthesis via salvage pathway; AMP from ADP: step 1/1.</text>
</comment>
<comment type="subunit">
    <text evidence="1">Monomer.</text>
</comment>
<comment type="subcellular location">
    <subcellularLocation>
        <location evidence="1">Cytoplasm</location>
    </subcellularLocation>
</comment>
<comment type="domain">
    <text evidence="1">Consists of three domains, a large central CORE domain and two small peripheral domains, NMPbind and LID, which undergo movements during catalysis. The LID domain closes over the site of phosphoryl transfer upon ATP binding. Assembling and dissambling the active center during each catalytic cycle provides an effective means to prevent ATP hydrolysis.</text>
</comment>
<comment type="similarity">
    <text evidence="1">Belongs to the adenylate kinase family.</text>
</comment>
<protein>
    <recommendedName>
        <fullName evidence="1">Adenylate kinase</fullName>
        <shortName evidence="1">AK</shortName>
        <ecNumber evidence="1">2.7.4.3</ecNumber>
    </recommendedName>
    <alternativeName>
        <fullName evidence="1">ATP-AMP transphosphorylase</fullName>
    </alternativeName>
    <alternativeName>
        <fullName evidence="1">ATP:AMP phosphotransferase</fullName>
    </alternativeName>
    <alternativeName>
        <fullName evidence="1">Adenylate monophosphate kinase</fullName>
    </alternativeName>
</protein>
<proteinExistence type="inferred from homology"/>
<keyword id="KW-0067">ATP-binding</keyword>
<keyword id="KW-0963">Cytoplasm</keyword>
<keyword id="KW-0418">Kinase</keyword>
<keyword id="KW-0545">Nucleotide biosynthesis</keyword>
<keyword id="KW-0547">Nucleotide-binding</keyword>
<keyword id="KW-0808">Transferase</keyword>
<gene>
    <name evidence="1" type="primary">adk</name>
    <name type="ordered locus">ACICU_00984</name>
</gene>
<evidence type="ECO:0000255" key="1">
    <source>
        <dbReference type="HAMAP-Rule" id="MF_00235"/>
    </source>
</evidence>
<dbReference type="EC" id="2.7.4.3" evidence="1"/>
<dbReference type="EMBL" id="CP000863">
    <property type="protein sequence ID" value="ACC56296.1"/>
    <property type="molecule type" value="Genomic_DNA"/>
</dbReference>
<dbReference type="RefSeq" id="WP_001220244.1">
    <property type="nucleotide sequence ID" value="NZ_CP031380.1"/>
</dbReference>
<dbReference type="SMR" id="B2HVT0"/>
<dbReference type="GeneID" id="92892986"/>
<dbReference type="KEGG" id="abc:ACICU_00984"/>
<dbReference type="HOGENOM" id="CLU_032354_1_2_6"/>
<dbReference type="UniPathway" id="UPA00588">
    <property type="reaction ID" value="UER00649"/>
</dbReference>
<dbReference type="Proteomes" id="UP000008839">
    <property type="component" value="Chromosome"/>
</dbReference>
<dbReference type="GO" id="GO:0005737">
    <property type="term" value="C:cytoplasm"/>
    <property type="evidence" value="ECO:0007669"/>
    <property type="project" value="UniProtKB-SubCell"/>
</dbReference>
<dbReference type="GO" id="GO:0004017">
    <property type="term" value="F:adenylate kinase activity"/>
    <property type="evidence" value="ECO:0007669"/>
    <property type="project" value="UniProtKB-UniRule"/>
</dbReference>
<dbReference type="GO" id="GO:0005524">
    <property type="term" value="F:ATP binding"/>
    <property type="evidence" value="ECO:0007669"/>
    <property type="project" value="UniProtKB-UniRule"/>
</dbReference>
<dbReference type="GO" id="GO:0044209">
    <property type="term" value="P:AMP salvage"/>
    <property type="evidence" value="ECO:0007669"/>
    <property type="project" value="UniProtKB-UniRule"/>
</dbReference>
<dbReference type="CDD" id="cd01428">
    <property type="entry name" value="ADK"/>
    <property type="match status" value="1"/>
</dbReference>
<dbReference type="FunFam" id="3.40.50.300:FF:000106">
    <property type="entry name" value="Adenylate kinase mitochondrial"/>
    <property type="match status" value="1"/>
</dbReference>
<dbReference type="Gene3D" id="3.40.50.300">
    <property type="entry name" value="P-loop containing nucleotide triphosphate hydrolases"/>
    <property type="match status" value="1"/>
</dbReference>
<dbReference type="HAMAP" id="MF_00235">
    <property type="entry name" value="Adenylate_kinase_Adk"/>
    <property type="match status" value="1"/>
</dbReference>
<dbReference type="InterPro" id="IPR006259">
    <property type="entry name" value="Adenyl_kin_sub"/>
</dbReference>
<dbReference type="InterPro" id="IPR000850">
    <property type="entry name" value="Adenylat/UMP-CMP_kin"/>
</dbReference>
<dbReference type="InterPro" id="IPR033690">
    <property type="entry name" value="Adenylat_kinase_CS"/>
</dbReference>
<dbReference type="InterPro" id="IPR007862">
    <property type="entry name" value="Adenylate_kinase_lid-dom"/>
</dbReference>
<dbReference type="InterPro" id="IPR027417">
    <property type="entry name" value="P-loop_NTPase"/>
</dbReference>
<dbReference type="NCBIfam" id="TIGR01351">
    <property type="entry name" value="adk"/>
    <property type="match status" value="1"/>
</dbReference>
<dbReference type="NCBIfam" id="NF001379">
    <property type="entry name" value="PRK00279.1-1"/>
    <property type="match status" value="1"/>
</dbReference>
<dbReference type="NCBIfam" id="NF001380">
    <property type="entry name" value="PRK00279.1-2"/>
    <property type="match status" value="1"/>
</dbReference>
<dbReference type="NCBIfam" id="NF001381">
    <property type="entry name" value="PRK00279.1-3"/>
    <property type="match status" value="1"/>
</dbReference>
<dbReference type="NCBIfam" id="NF011100">
    <property type="entry name" value="PRK14527.1"/>
    <property type="match status" value="1"/>
</dbReference>
<dbReference type="PANTHER" id="PTHR23359">
    <property type="entry name" value="NUCLEOTIDE KINASE"/>
    <property type="match status" value="1"/>
</dbReference>
<dbReference type="Pfam" id="PF00406">
    <property type="entry name" value="ADK"/>
    <property type="match status" value="1"/>
</dbReference>
<dbReference type="Pfam" id="PF05191">
    <property type="entry name" value="ADK_lid"/>
    <property type="match status" value="1"/>
</dbReference>
<dbReference type="PRINTS" id="PR00094">
    <property type="entry name" value="ADENYLTKNASE"/>
</dbReference>
<dbReference type="SUPFAM" id="SSF52540">
    <property type="entry name" value="P-loop containing nucleoside triphosphate hydrolases"/>
    <property type="match status" value="1"/>
</dbReference>
<dbReference type="PROSITE" id="PS00113">
    <property type="entry name" value="ADENYLATE_KINASE"/>
    <property type="match status" value="1"/>
</dbReference>
<accession>B2HVT0</accession>
<sequence>MRIILLGPPGAGKGTQAQLICKRYNIPQISTGDMLRAAIREGTELGLKAKSVMESGGLVSDELIIGLVKERIAQPDCVNGCIFDGFPRTIPQAEALEKEGISIDHVIEIDVPDEEIVKRLSGRRQHPASGRVYHVVYNPPKVEGKDDETGEDLVQRPDDQEETIRKRLASYHTETEQLVGFYQGRAASGENAPTYDKLDGLRTIEDVQKDLFNILDK</sequence>
<name>KAD_ACIBC</name>
<reference key="1">
    <citation type="journal article" date="2008" name="Antimicrob. Agents Chemother.">
        <title>Whole-genome pyrosequencing of an epidemic multidrug-resistant Acinetobacter baumannii strain belonging to the European clone II group.</title>
        <authorList>
            <person name="Iacono M."/>
            <person name="Villa L."/>
            <person name="Fortini D."/>
            <person name="Bordoni R."/>
            <person name="Imperi F."/>
            <person name="Bonnal R.J."/>
            <person name="Sicheritz-Ponten T."/>
            <person name="De Bellis G."/>
            <person name="Visca P."/>
            <person name="Cassone A."/>
            <person name="Carattoli A."/>
        </authorList>
    </citation>
    <scope>NUCLEOTIDE SEQUENCE [LARGE SCALE GENOMIC DNA]</scope>
    <source>
        <strain>ACICU</strain>
    </source>
</reference>
<feature type="chain" id="PRO_1000100519" description="Adenylate kinase">
    <location>
        <begin position="1"/>
        <end position="217"/>
    </location>
</feature>
<feature type="region of interest" description="NMP" evidence="1">
    <location>
        <begin position="30"/>
        <end position="59"/>
    </location>
</feature>
<feature type="region of interest" description="LID" evidence="1">
    <location>
        <begin position="122"/>
        <end position="159"/>
    </location>
</feature>
<feature type="binding site" evidence="1">
    <location>
        <begin position="10"/>
        <end position="15"/>
    </location>
    <ligand>
        <name>ATP</name>
        <dbReference type="ChEBI" id="CHEBI:30616"/>
    </ligand>
</feature>
<feature type="binding site" evidence="1">
    <location>
        <position position="31"/>
    </location>
    <ligand>
        <name>AMP</name>
        <dbReference type="ChEBI" id="CHEBI:456215"/>
    </ligand>
</feature>
<feature type="binding site" evidence="1">
    <location>
        <position position="36"/>
    </location>
    <ligand>
        <name>AMP</name>
        <dbReference type="ChEBI" id="CHEBI:456215"/>
    </ligand>
</feature>
<feature type="binding site" evidence="1">
    <location>
        <begin position="57"/>
        <end position="59"/>
    </location>
    <ligand>
        <name>AMP</name>
        <dbReference type="ChEBI" id="CHEBI:456215"/>
    </ligand>
</feature>
<feature type="binding site" evidence="1">
    <location>
        <begin position="85"/>
        <end position="88"/>
    </location>
    <ligand>
        <name>AMP</name>
        <dbReference type="ChEBI" id="CHEBI:456215"/>
    </ligand>
</feature>
<feature type="binding site" evidence="1">
    <location>
        <position position="92"/>
    </location>
    <ligand>
        <name>AMP</name>
        <dbReference type="ChEBI" id="CHEBI:456215"/>
    </ligand>
</feature>
<feature type="binding site" evidence="1">
    <location>
        <position position="123"/>
    </location>
    <ligand>
        <name>ATP</name>
        <dbReference type="ChEBI" id="CHEBI:30616"/>
    </ligand>
</feature>
<feature type="binding site" evidence="1">
    <location>
        <begin position="132"/>
        <end position="133"/>
    </location>
    <ligand>
        <name>ATP</name>
        <dbReference type="ChEBI" id="CHEBI:30616"/>
    </ligand>
</feature>
<feature type="binding site" evidence="1">
    <location>
        <position position="156"/>
    </location>
    <ligand>
        <name>AMP</name>
        <dbReference type="ChEBI" id="CHEBI:456215"/>
    </ligand>
</feature>
<feature type="binding site" evidence="1">
    <location>
        <position position="167"/>
    </location>
    <ligand>
        <name>AMP</name>
        <dbReference type="ChEBI" id="CHEBI:456215"/>
    </ligand>
</feature>
<feature type="binding site" evidence="1">
    <location>
        <position position="202"/>
    </location>
    <ligand>
        <name>ATP</name>
        <dbReference type="ChEBI" id="CHEBI:30616"/>
    </ligand>
</feature>